<comment type="function">
    <text evidence="1">Functions in the N-end rule pathway of protein degradation where it conjugates Leu from its aminoacyl-tRNA to the N-termini of proteins containing an N-terminal aspartate or glutamate.</text>
</comment>
<comment type="catalytic activity">
    <reaction evidence="1">
        <text>N-terminal L-glutamyl-[protein] + L-leucyl-tRNA(Leu) = N-terminal L-leucyl-L-glutamyl-[protein] + tRNA(Leu) + H(+)</text>
        <dbReference type="Rhea" id="RHEA:50412"/>
        <dbReference type="Rhea" id="RHEA-COMP:9613"/>
        <dbReference type="Rhea" id="RHEA-COMP:9622"/>
        <dbReference type="Rhea" id="RHEA-COMP:12664"/>
        <dbReference type="Rhea" id="RHEA-COMP:12668"/>
        <dbReference type="ChEBI" id="CHEBI:15378"/>
        <dbReference type="ChEBI" id="CHEBI:64721"/>
        <dbReference type="ChEBI" id="CHEBI:78442"/>
        <dbReference type="ChEBI" id="CHEBI:78494"/>
        <dbReference type="ChEBI" id="CHEBI:133041"/>
        <dbReference type="EC" id="2.3.2.29"/>
    </reaction>
</comment>
<comment type="catalytic activity">
    <reaction evidence="1">
        <text>N-terminal L-aspartyl-[protein] + L-leucyl-tRNA(Leu) = N-terminal L-leucyl-L-aspartyl-[protein] + tRNA(Leu) + H(+)</text>
        <dbReference type="Rhea" id="RHEA:50420"/>
        <dbReference type="Rhea" id="RHEA-COMP:9613"/>
        <dbReference type="Rhea" id="RHEA-COMP:9622"/>
        <dbReference type="Rhea" id="RHEA-COMP:12669"/>
        <dbReference type="Rhea" id="RHEA-COMP:12674"/>
        <dbReference type="ChEBI" id="CHEBI:15378"/>
        <dbReference type="ChEBI" id="CHEBI:64720"/>
        <dbReference type="ChEBI" id="CHEBI:78442"/>
        <dbReference type="ChEBI" id="CHEBI:78494"/>
        <dbReference type="ChEBI" id="CHEBI:133042"/>
        <dbReference type="EC" id="2.3.2.29"/>
    </reaction>
</comment>
<comment type="subcellular location">
    <subcellularLocation>
        <location evidence="1">Cytoplasm</location>
    </subcellularLocation>
</comment>
<comment type="similarity">
    <text evidence="1">Belongs to the R-transferase family. Bpt subfamily.</text>
</comment>
<organism>
    <name type="scientific">Burkholderia mallei (strain NCTC 10247)</name>
    <dbReference type="NCBI Taxonomy" id="320389"/>
    <lineage>
        <taxon>Bacteria</taxon>
        <taxon>Pseudomonadati</taxon>
        <taxon>Pseudomonadota</taxon>
        <taxon>Betaproteobacteria</taxon>
        <taxon>Burkholderiales</taxon>
        <taxon>Burkholderiaceae</taxon>
        <taxon>Burkholderia</taxon>
        <taxon>pseudomallei group</taxon>
    </lineage>
</organism>
<feature type="chain" id="PRO_1000045126" description="Aspartate/glutamate leucyltransferase">
    <location>
        <begin position="1"/>
        <end position="276"/>
    </location>
</feature>
<name>BPT_BURM7</name>
<accession>A3MJ99</accession>
<sequence>MTHPTELPLSPLSALQFYATAPYPCSYLDGRVARSQVATPSHLINSDIYTELVKAGFRRSGVFTYRPYCDGCRACVPVRVPVDAFAPNRTQRRTWKRHRALVATVAALHYDEEHYALYMRYQSARHAGGGMDRDSRDQYEQFLLQSRINSRLVEFRDLDPAENGASTLRMVSMIDILGDGLSSVYTFFDPDESHASYGTYNILWQIEQAKSLRLPYVYLGYWIRESPKMAYKANFHPLEGLVDGRWKVLDPTLADLPPVDAALARAPLPGGHSGTR</sequence>
<dbReference type="EC" id="2.3.2.29" evidence="1"/>
<dbReference type="EMBL" id="CP000548">
    <property type="protein sequence ID" value="ABO06132.1"/>
    <property type="molecule type" value="Genomic_DNA"/>
</dbReference>
<dbReference type="RefSeq" id="WP_004192823.1">
    <property type="nucleotide sequence ID" value="NZ_CP007802.1"/>
</dbReference>
<dbReference type="SMR" id="A3MJ99"/>
<dbReference type="KEGG" id="bmaz:BM44_2295"/>
<dbReference type="KEGG" id="bmn:BMA10247_0769"/>
<dbReference type="PATRIC" id="fig|320389.8.peg.2576"/>
<dbReference type="GO" id="GO:0005737">
    <property type="term" value="C:cytoplasm"/>
    <property type="evidence" value="ECO:0007669"/>
    <property type="project" value="UniProtKB-SubCell"/>
</dbReference>
<dbReference type="GO" id="GO:0004057">
    <property type="term" value="F:arginyl-tRNA--protein transferase activity"/>
    <property type="evidence" value="ECO:0007669"/>
    <property type="project" value="InterPro"/>
</dbReference>
<dbReference type="GO" id="GO:0008914">
    <property type="term" value="F:leucyl-tRNA--protein transferase activity"/>
    <property type="evidence" value="ECO:0007669"/>
    <property type="project" value="UniProtKB-UniRule"/>
</dbReference>
<dbReference type="GO" id="GO:0071596">
    <property type="term" value="P:ubiquitin-dependent protein catabolic process via the N-end rule pathway"/>
    <property type="evidence" value="ECO:0007669"/>
    <property type="project" value="InterPro"/>
</dbReference>
<dbReference type="HAMAP" id="MF_00689">
    <property type="entry name" value="Bpt"/>
    <property type="match status" value="1"/>
</dbReference>
<dbReference type="InterPro" id="IPR016181">
    <property type="entry name" value="Acyl_CoA_acyltransferase"/>
</dbReference>
<dbReference type="InterPro" id="IPR017138">
    <property type="entry name" value="Asp_Glu_LeuTrfase"/>
</dbReference>
<dbReference type="InterPro" id="IPR030700">
    <property type="entry name" value="N-end_Aminoacyl_Trfase"/>
</dbReference>
<dbReference type="InterPro" id="IPR007472">
    <property type="entry name" value="N-end_Aminoacyl_Trfase_C"/>
</dbReference>
<dbReference type="InterPro" id="IPR007471">
    <property type="entry name" value="N-end_Aminoacyl_Trfase_N"/>
</dbReference>
<dbReference type="NCBIfam" id="NF002341">
    <property type="entry name" value="PRK01305.1-1"/>
    <property type="match status" value="1"/>
</dbReference>
<dbReference type="NCBIfam" id="NF002342">
    <property type="entry name" value="PRK01305.1-3"/>
    <property type="match status" value="1"/>
</dbReference>
<dbReference type="NCBIfam" id="NF002346">
    <property type="entry name" value="PRK01305.2-3"/>
    <property type="match status" value="1"/>
</dbReference>
<dbReference type="PANTHER" id="PTHR21367">
    <property type="entry name" value="ARGININE-TRNA-PROTEIN TRANSFERASE 1"/>
    <property type="match status" value="1"/>
</dbReference>
<dbReference type="PANTHER" id="PTHR21367:SF1">
    <property type="entry name" value="ARGINYL-TRNA--PROTEIN TRANSFERASE 1"/>
    <property type="match status" value="1"/>
</dbReference>
<dbReference type="Pfam" id="PF04377">
    <property type="entry name" value="ATE_C"/>
    <property type="match status" value="1"/>
</dbReference>
<dbReference type="Pfam" id="PF04376">
    <property type="entry name" value="ATE_N"/>
    <property type="match status" value="1"/>
</dbReference>
<dbReference type="PIRSF" id="PIRSF037208">
    <property type="entry name" value="ATE_pro_prd"/>
    <property type="match status" value="1"/>
</dbReference>
<dbReference type="SUPFAM" id="SSF55729">
    <property type="entry name" value="Acyl-CoA N-acyltransferases (Nat)"/>
    <property type="match status" value="1"/>
</dbReference>
<proteinExistence type="inferred from homology"/>
<reference key="1">
    <citation type="journal article" date="2010" name="Genome Biol. Evol.">
        <title>Continuing evolution of Burkholderia mallei through genome reduction and large-scale rearrangements.</title>
        <authorList>
            <person name="Losada L."/>
            <person name="Ronning C.M."/>
            <person name="DeShazer D."/>
            <person name="Woods D."/>
            <person name="Fedorova N."/>
            <person name="Kim H.S."/>
            <person name="Shabalina S.A."/>
            <person name="Pearson T.R."/>
            <person name="Brinkac L."/>
            <person name="Tan P."/>
            <person name="Nandi T."/>
            <person name="Crabtree J."/>
            <person name="Badger J."/>
            <person name="Beckstrom-Sternberg S."/>
            <person name="Saqib M."/>
            <person name="Schutzer S.E."/>
            <person name="Keim P."/>
            <person name="Nierman W.C."/>
        </authorList>
    </citation>
    <scope>NUCLEOTIDE SEQUENCE [LARGE SCALE GENOMIC DNA]</scope>
    <source>
        <strain>NCTC 10247</strain>
    </source>
</reference>
<gene>
    <name evidence="1" type="primary">bpt</name>
    <name type="ordered locus">BMA10247_0769</name>
</gene>
<protein>
    <recommendedName>
        <fullName evidence="1">Aspartate/glutamate leucyltransferase</fullName>
        <ecNumber evidence="1">2.3.2.29</ecNumber>
    </recommendedName>
</protein>
<evidence type="ECO:0000255" key="1">
    <source>
        <dbReference type="HAMAP-Rule" id="MF_00689"/>
    </source>
</evidence>
<keyword id="KW-0012">Acyltransferase</keyword>
<keyword id="KW-0963">Cytoplasm</keyword>
<keyword id="KW-0808">Transferase</keyword>